<keyword id="KW-1185">Reference proteome</keyword>
<keyword id="KW-0687">Ribonucleoprotein</keyword>
<keyword id="KW-0689">Ribosomal protein</keyword>
<keyword id="KW-0694">RNA-binding</keyword>
<keyword id="KW-0699">rRNA-binding</keyword>
<gene>
    <name evidence="1" type="primary">rpsS</name>
    <name type="ordered locus">Shew_0162</name>
</gene>
<sequence>MPRSLKKGPFIDLHLLKKVEKAMEAGDKKPIKTWSRRSMIIPNMIGMTIAVHNGRQHVPVFVTDEMIGHKLGEFSPTRTYRGHAADKKAKKR</sequence>
<evidence type="ECO:0000255" key="1">
    <source>
        <dbReference type="HAMAP-Rule" id="MF_00531"/>
    </source>
</evidence>
<evidence type="ECO:0000305" key="2"/>
<comment type="function">
    <text evidence="1">Protein S19 forms a complex with S13 that binds strongly to the 16S ribosomal RNA.</text>
</comment>
<comment type="similarity">
    <text evidence="1">Belongs to the universal ribosomal protein uS19 family.</text>
</comment>
<dbReference type="EMBL" id="CP000606">
    <property type="protein sequence ID" value="ABO22034.1"/>
    <property type="molecule type" value="Genomic_DNA"/>
</dbReference>
<dbReference type="RefSeq" id="WP_011863970.1">
    <property type="nucleotide sequence ID" value="NC_009092.1"/>
</dbReference>
<dbReference type="SMR" id="A3Q986"/>
<dbReference type="STRING" id="323850.Shew_0162"/>
<dbReference type="KEGG" id="slo:Shew_0162"/>
<dbReference type="eggNOG" id="COG0185">
    <property type="taxonomic scope" value="Bacteria"/>
</dbReference>
<dbReference type="HOGENOM" id="CLU_144911_0_1_6"/>
<dbReference type="OrthoDB" id="9797833at2"/>
<dbReference type="Proteomes" id="UP000001558">
    <property type="component" value="Chromosome"/>
</dbReference>
<dbReference type="GO" id="GO:0005737">
    <property type="term" value="C:cytoplasm"/>
    <property type="evidence" value="ECO:0007669"/>
    <property type="project" value="UniProtKB-ARBA"/>
</dbReference>
<dbReference type="GO" id="GO:0015935">
    <property type="term" value="C:small ribosomal subunit"/>
    <property type="evidence" value="ECO:0007669"/>
    <property type="project" value="InterPro"/>
</dbReference>
<dbReference type="GO" id="GO:0019843">
    <property type="term" value="F:rRNA binding"/>
    <property type="evidence" value="ECO:0007669"/>
    <property type="project" value="UniProtKB-UniRule"/>
</dbReference>
<dbReference type="GO" id="GO:0003735">
    <property type="term" value="F:structural constituent of ribosome"/>
    <property type="evidence" value="ECO:0007669"/>
    <property type="project" value="InterPro"/>
</dbReference>
<dbReference type="GO" id="GO:0000028">
    <property type="term" value="P:ribosomal small subunit assembly"/>
    <property type="evidence" value="ECO:0007669"/>
    <property type="project" value="TreeGrafter"/>
</dbReference>
<dbReference type="GO" id="GO:0006412">
    <property type="term" value="P:translation"/>
    <property type="evidence" value="ECO:0007669"/>
    <property type="project" value="UniProtKB-UniRule"/>
</dbReference>
<dbReference type="FunFam" id="3.30.860.10:FF:000001">
    <property type="entry name" value="30S ribosomal protein S19"/>
    <property type="match status" value="1"/>
</dbReference>
<dbReference type="Gene3D" id="3.30.860.10">
    <property type="entry name" value="30s Ribosomal Protein S19, Chain A"/>
    <property type="match status" value="1"/>
</dbReference>
<dbReference type="HAMAP" id="MF_00531">
    <property type="entry name" value="Ribosomal_uS19"/>
    <property type="match status" value="1"/>
</dbReference>
<dbReference type="InterPro" id="IPR002222">
    <property type="entry name" value="Ribosomal_uS19"/>
</dbReference>
<dbReference type="InterPro" id="IPR005732">
    <property type="entry name" value="Ribosomal_uS19_bac-type"/>
</dbReference>
<dbReference type="InterPro" id="IPR020934">
    <property type="entry name" value="Ribosomal_uS19_CS"/>
</dbReference>
<dbReference type="InterPro" id="IPR023575">
    <property type="entry name" value="Ribosomal_uS19_SF"/>
</dbReference>
<dbReference type="NCBIfam" id="TIGR01050">
    <property type="entry name" value="rpsS_bact"/>
    <property type="match status" value="1"/>
</dbReference>
<dbReference type="PANTHER" id="PTHR11880">
    <property type="entry name" value="RIBOSOMAL PROTEIN S19P FAMILY MEMBER"/>
    <property type="match status" value="1"/>
</dbReference>
<dbReference type="PANTHER" id="PTHR11880:SF8">
    <property type="entry name" value="SMALL RIBOSOMAL SUBUNIT PROTEIN US19M"/>
    <property type="match status" value="1"/>
</dbReference>
<dbReference type="Pfam" id="PF00203">
    <property type="entry name" value="Ribosomal_S19"/>
    <property type="match status" value="1"/>
</dbReference>
<dbReference type="PIRSF" id="PIRSF002144">
    <property type="entry name" value="Ribosomal_S19"/>
    <property type="match status" value="1"/>
</dbReference>
<dbReference type="PRINTS" id="PR00975">
    <property type="entry name" value="RIBOSOMALS19"/>
</dbReference>
<dbReference type="SUPFAM" id="SSF54570">
    <property type="entry name" value="Ribosomal protein S19"/>
    <property type="match status" value="1"/>
</dbReference>
<dbReference type="PROSITE" id="PS00323">
    <property type="entry name" value="RIBOSOMAL_S19"/>
    <property type="match status" value="1"/>
</dbReference>
<feature type="chain" id="PRO_1000051123" description="Small ribosomal subunit protein uS19">
    <location>
        <begin position="1"/>
        <end position="92"/>
    </location>
</feature>
<accession>A3Q986</accession>
<reference key="1">
    <citation type="submission" date="2007-03" db="EMBL/GenBank/DDBJ databases">
        <title>Complete sequence of Shewanella loihica PV-4.</title>
        <authorList>
            <consortium name="US DOE Joint Genome Institute"/>
            <person name="Copeland A."/>
            <person name="Lucas S."/>
            <person name="Lapidus A."/>
            <person name="Barry K."/>
            <person name="Detter J.C."/>
            <person name="Glavina del Rio T."/>
            <person name="Hammon N."/>
            <person name="Israni S."/>
            <person name="Dalin E."/>
            <person name="Tice H."/>
            <person name="Pitluck S."/>
            <person name="Chain P."/>
            <person name="Malfatti S."/>
            <person name="Shin M."/>
            <person name="Vergez L."/>
            <person name="Schmutz J."/>
            <person name="Larimer F."/>
            <person name="Land M."/>
            <person name="Hauser L."/>
            <person name="Kyrpides N."/>
            <person name="Mikhailova N."/>
            <person name="Romine M.F."/>
            <person name="Serres G."/>
            <person name="Fredrickson J."/>
            <person name="Tiedje J."/>
            <person name="Richardson P."/>
        </authorList>
    </citation>
    <scope>NUCLEOTIDE SEQUENCE [LARGE SCALE GENOMIC DNA]</scope>
    <source>
        <strain>ATCC BAA-1088 / PV-4</strain>
    </source>
</reference>
<protein>
    <recommendedName>
        <fullName evidence="1">Small ribosomal subunit protein uS19</fullName>
    </recommendedName>
    <alternativeName>
        <fullName evidence="2">30S ribosomal protein S19</fullName>
    </alternativeName>
</protein>
<organism>
    <name type="scientific">Shewanella loihica (strain ATCC BAA-1088 / PV-4)</name>
    <dbReference type="NCBI Taxonomy" id="323850"/>
    <lineage>
        <taxon>Bacteria</taxon>
        <taxon>Pseudomonadati</taxon>
        <taxon>Pseudomonadota</taxon>
        <taxon>Gammaproteobacteria</taxon>
        <taxon>Alteromonadales</taxon>
        <taxon>Shewanellaceae</taxon>
        <taxon>Shewanella</taxon>
    </lineage>
</organism>
<proteinExistence type="inferred from homology"/>
<name>RS19_SHELP</name>